<reference key="1">
    <citation type="journal article" date="2005" name="Nature">
        <title>The genome of the social amoeba Dictyostelium discoideum.</title>
        <authorList>
            <person name="Eichinger L."/>
            <person name="Pachebat J.A."/>
            <person name="Gloeckner G."/>
            <person name="Rajandream M.A."/>
            <person name="Sucgang R."/>
            <person name="Berriman M."/>
            <person name="Song J."/>
            <person name="Olsen R."/>
            <person name="Szafranski K."/>
            <person name="Xu Q."/>
            <person name="Tunggal B."/>
            <person name="Kummerfeld S."/>
            <person name="Madera M."/>
            <person name="Konfortov B.A."/>
            <person name="Rivero F."/>
            <person name="Bankier A.T."/>
            <person name="Lehmann R."/>
            <person name="Hamlin N."/>
            <person name="Davies R."/>
            <person name="Gaudet P."/>
            <person name="Fey P."/>
            <person name="Pilcher K."/>
            <person name="Chen G."/>
            <person name="Saunders D."/>
            <person name="Sodergren E.J."/>
            <person name="Davis P."/>
            <person name="Kerhornou A."/>
            <person name="Nie X."/>
            <person name="Hall N."/>
            <person name="Anjard C."/>
            <person name="Hemphill L."/>
            <person name="Bason N."/>
            <person name="Farbrother P."/>
            <person name="Desany B."/>
            <person name="Just E."/>
            <person name="Morio T."/>
            <person name="Rost R."/>
            <person name="Churcher C.M."/>
            <person name="Cooper J."/>
            <person name="Haydock S."/>
            <person name="van Driessche N."/>
            <person name="Cronin A."/>
            <person name="Goodhead I."/>
            <person name="Muzny D.M."/>
            <person name="Mourier T."/>
            <person name="Pain A."/>
            <person name="Lu M."/>
            <person name="Harper D."/>
            <person name="Lindsay R."/>
            <person name="Hauser H."/>
            <person name="James K.D."/>
            <person name="Quiles M."/>
            <person name="Madan Babu M."/>
            <person name="Saito T."/>
            <person name="Buchrieser C."/>
            <person name="Wardroper A."/>
            <person name="Felder M."/>
            <person name="Thangavelu M."/>
            <person name="Johnson D."/>
            <person name="Knights A."/>
            <person name="Loulseged H."/>
            <person name="Mungall K.L."/>
            <person name="Oliver K."/>
            <person name="Price C."/>
            <person name="Quail M.A."/>
            <person name="Urushihara H."/>
            <person name="Hernandez J."/>
            <person name="Rabbinowitsch E."/>
            <person name="Steffen D."/>
            <person name="Sanders M."/>
            <person name="Ma J."/>
            <person name="Kohara Y."/>
            <person name="Sharp S."/>
            <person name="Simmonds M.N."/>
            <person name="Spiegler S."/>
            <person name="Tivey A."/>
            <person name="Sugano S."/>
            <person name="White B."/>
            <person name="Walker D."/>
            <person name="Woodward J.R."/>
            <person name="Winckler T."/>
            <person name="Tanaka Y."/>
            <person name="Shaulsky G."/>
            <person name="Schleicher M."/>
            <person name="Weinstock G.M."/>
            <person name="Rosenthal A."/>
            <person name="Cox E.C."/>
            <person name="Chisholm R.L."/>
            <person name="Gibbs R.A."/>
            <person name="Loomis W.F."/>
            <person name="Platzer M."/>
            <person name="Kay R.R."/>
            <person name="Williams J.G."/>
            <person name="Dear P.H."/>
            <person name="Noegel A.A."/>
            <person name="Barrell B.G."/>
            <person name="Kuspa A."/>
        </authorList>
    </citation>
    <scope>NUCLEOTIDE SEQUENCE [LARGE SCALE GENOMIC DNA]</scope>
    <source>
        <strain>AX4</strain>
    </source>
</reference>
<proteinExistence type="inferred from homology"/>
<name>ADRO_DICDI</name>
<sequence>MINVLINKSSKLVNGVDSCINNKTIRLFCSSSSTNQVNKTPFNLCIIGSGPAGLYTAAKVHRQIPHANITILEKLPYPFGLVRSGISPDHQNEKKVKNTLEKVLLEHPHQIQFIGNVDIEKDIKFQYIKDNFHAVVLACGIEGDKKLGIPGELTLKNVYFAREFIGWLNGNLKDQHKQFDLSNENLAIVGQGNVALDVARLLLKKNSDELKKTDITSTSFDKINKSNVKNIHIIGRRGPLEVSFTNKEIREILTLQNVNTFINDISTLDVSEEDVSKLERAKKRTFELFKQHLKPFDQEIANNGNMNLIFHFLRSPVELLDKYGSSSGSGDGMVLSKIKLEKNKLIIDEKTQQKKAIGSGEFEIIECSSLFRSIGYTGTKQFPSVPFDFNSVSIPNKYGKVLEEPNSDKFINGLYVSGWLKGGPSGSIPNISANSEETASIIHQDYESNQFINNNNNNDGGHNSITSLLQPNHKIINFNDYKKIESEEVKRGKEKGKLLEKIIVFDELKNIINNS</sequence>
<organism>
    <name type="scientific">Dictyostelium discoideum</name>
    <name type="common">Social amoeba</name>
    <dbReference type="NCBI Taxonomy" id="44689"/>
    <lineage>
        <taxon>Eukaryota</taxon>
        <taxon>Amoebozoa</taxon>
        <taxon>Evosea</taxon>
        <taxon>Eumycetozoa</taxon>
        <taxon>Dictyostelia</taxon>
        <taxon>Dictyosteliales</taxon>
        <taxon>Dictyosteliaceae</taxon>
        <taxon>Dictyostelium</taxon>
    </lineage>
</organism>
<protein>
    <recommendedName>
        <fullName>Probable NADPH:adrenodoxin oxidoreductase, mitochondrial</fullName>
        <shortName>AR</shortName>
        <shortName>Adrenodoxin reductase</shortName>
        <ecNumber>1.18.1.6</ecNumber>
    </recommendedName>
    <alternativeName>
        <fullName>Ferredoxin--NADP(+) reductase</fullName>
        <shortName>Ferredoxin reductase</shortName>
    </alternativeName>
</protein>
<gene>
    <name type="primary">fdxr</name>
    <name type="ORF">DDB_G0287353</name>
</gene>
<dbReference type="EC" id="1.18.1.6"/>
<dbReference type="EMBL" id="AAFI02000100">
    <property type="protein sequence ID" value="EAL63744.1"/>
    <property type="molecule type" value="Genomic_DNA"/>
</dbReference>
<dbReference type="RefSeq" id="XP_637256.1">
    <property type="nucleotide sequence ID" value="XM_632164.1"/>
</dbReference>
<dbReference type="SMR" id="Q54KG7"/>
<dbReference type="FunCoup" id="Q54KG7">
    <property type="interactions" value="706"/>
</dbReference>
<dbReference type="STRING" id="44689.Q54KG7"/>
<dbReference type="PaxDb" id="44689-DDB0234047"/>
<dbReference type="EnsemblProtists" id="EAL63744">
    <property type="protein sequence ID" value="EAL63744"/>
    <property type="gene ID" value="DDB_G0287353"/>
</dbReference>
<dbReference type="GeneID" id="8626086"/>
<dbReference type="KEGG" id="ddi:DDB_G0287353"/>
<dbReference type="dictyBase" id="DDB_G0287353">
    <property type="gene designation" value="fdxr"/>
</dbReference>
<dbReference type="VEuPathDB" id="AmoebaDB:DDB_G0287353"/>
<dbReference type="eggNOG" id="KOG1800">
    <property type="taxonomic scope" value="Eukaryota"/>
</dbReference>
<dbReference type="HOGENOM" id="CLU_024722_3_0_1"/>
<dbReference type="InParanoid" id="Q54KG7"/>
<dbReference type="OMA" id="RFNFIGN"/>
<dbReference type="PhylomeDB" id="Q54KG7"/>
<dbReference type="Reactome" id="R-DDI-2395516">
    <property type="pathway name" value="Electron transport from NADPH to Ferredoxin"/>
</dbReference>
<dbReference type="PRO" id="PR:Q54KG7"/>
<dbReference type="Proteomes" id="UP000002195">
    <property type="component" value="Chromosome 5"/>
</dbReference>
<dbReference type="GO" id="GO:0005743">
    <property type="term" value="C:mitochondrial inner membrane"/>
    <property type="evidence" value="ECO:0000250"/>
    <property type="project" value="dictyBase"/>
</dbReference>
<dbReference type="GO" id="GO:0005739">
    <property type="term" value="C:mitochondrion"/>
    <property type="evidence" value="ECO:0000250"/>
    <property type="project" value="UniProtKB"/>
</dbReference>
<dbReference type="GO" id="GO:0004324">
    <property type="term" value="F:ferredoxin-NADP+ reductase activity"/>
    <property type="evidence" value="ECO:0000250"/>
    <property type="project" value="dictyBase"/>
</dbReference>
<dbReference type="GO" id="GO:0016491">
    <property type="term" value="F:oxidoreductase activity"/>
    <property type="evidence" value="ECO:0000318"/>
    <property type="project" value="GO_Central"/>
</dbReference>
<dbReference type="GO" id="GO:0022900">
    <property type="term" value="P:electron transport chain"/>
    <property type="evidence" value="ECO:0000305"/>
    <property type="project" value="dictyBase"/>
</dbReference>
<dbReference type="FunFam" id="3.50.50.60:FF:000229">
    <property type="entry name" value="NADPH:adrenodoxin oxidoreductase, mitochondrial"/>
    <property type="match status" value="1"/>
</dbReference>
<dbReference type="Gene3D" id="3.50.50.60">
    <property type="entry name" value="FAD/NAD(P)-binding domain"/>
    <property type="match status" value="1"/>
</dbReference>
<dbReference type="Gene3D" id="3.40.50.720">
    <property type="entry name" value="NAD(P)-binding Rossmann-like Domain"/>
    <property type="match status" value="1"/>
</dbReference>
<dbReference type="InterPro" id="IPR036188">
    <property type="entry name" value="FAD/NAD-bd_sf"/>
</dbReference>
<dbReference type="InterPro" id="IPR023753">
    <property type="entry name" value="FAD/NAD-binding_dom"/>
</dbReference>
<dbReference type="InterPro" id="IPR055275">
    <property type="entry name" value="Ferredox_Rdtase"/>
</dbReference>
<dbReference type="InterPro" id="IPR021163">
    <property type="entry name" value="Ferredox_Rdtase_adrenod"/>
</dbReference>
<dbReference type="PANTHER" id="PTHR48467">
    <property type="entry name" value="GLUTAMATE SYNTHASE 1 [NADH], CHLOROPLASTIC-LIKE"/>
    <property type="match status" value="1"/>
</dbReference>
<dbReference type="PANTHER" id="PTHR48467:SF1">
    <property type="entry name" value="GLUTAMATE SYNTHASE 1 [NADH], CHLOROPLASTIC-LIKE"/>
    <property type="match status" value="1"/>
</dbReference>
<dbReference type="Pfam" id="PF07992">
    <property type="entry name" value="Pyr_redox_2"/>
    <property type="match status" value="1"/>
</dbReference>
<dbReference type="PIRSF" id="PIRSF000362">
    <property type="entry name" value="FNR"/>
    <property type="match status" value="1"/>
</dbReference>
<dbReference type="PRINTS" id="PR00419">
    <property type="entry name" value="ADXRDTASE"/>
</dbReference>
<dbReference type="SUPFAM" id="SSF51971">
    <property type="entry name" value="Nucleotide-binding domain"/>
    <property type="match status" value="1"/>
</dbReference>
<accession>Q54KG7</accession>
<feature type="transit peptide" description="Mitochondrion" evidence="3">
    <location>
        <begin position="1"/>
        <end status="unknown"/>
    </location>
</feature>
<feature type="chain" id="PRO_0000331233" description="Probable NADPH:adrenodoxin oxidoreductase, mitochondrial">
    <location>
        <begin status="unknown"/>
        <end position="515"/>
    </location>
</feature>
<feature type="binding site" evidence="1">
    <location>
        <position position="52"/>
    </location>
    <ligand>
        <name>FAD</name>
        <dbReference type="ChEBI" id="CHEBI:57692"/>
    </ligand>
</feature>
<feature type="binding site" evidence="1">
    <location>
        <position position="73"/>
    </location>
    <ligand>
        <name>FAD</name>
        <dbReference type="ChEBI" id="CHEBI:57692"/>
    </ligand>
</feature>
<feature type="binding site" evidence="1">
    <location>
        <position position="81"/>
    </location>
    <ligand>
        <name>FAD</name>
        <dbReference type="ChEBI" id="CHEBI:57692"/>
    </ligand>
</feature>
<feature type="binding site" evidence="1">
    <location>
        <position position="119"/>
    </location>
    <ligand>
        <name>FAD</name>
        <dbReference type="ChEBI" id="CHEBI:57692"/>
    </ligand>
</feature>
<feature type="binding site" evidence="1">
    <location>
        <begin position="191"/>
        <end position="194"/>
    </location>
    <ligand>
        <name>NADP(+)</name>
        <dbReference type="ChEBI" id="CHEBI:58349"/>
    </ligand>
</feature>
<feature type="binding site" evidence="1">
    <location>
        <begin position="236"/>
        <end position="237"/>
    </location>
    <ligand>
        <name>NADP(+)</name>
        <dbReference type="ChEBI" id="CHEBI:58349"/>
    </ligand>
</feature>
<feature type="binding site" evidence="1">
    <location>
        <position position="248"/>
    </location>
    <ligand>
        <name>NADP(+)</name>
        <dbReference type="ChEBI" id="CHEBI:58349"/>
    </ligand>
</feature>
<feature type="binding site" evidence="1">
    <location>
        <position position="419"/>
    </location>
    <ligand>
        <name>FAD</name>
        <dbReference type="ChEBI" id="CHEBI:57692"/>
    </ligand>
</feature>
<feature type="binding site" evidence="1">
    <location>
        <begin position="426"/>
        <end position="428"/>
    </location>
    <ligand>
        <name>FAD</name>
        <dbReference type="ChEBI" id="CHEBI:57692"/>
    </ligand>
</feature>
<feature type="binding site" evidence="1">
    <location>
        <position position="426"/>
    </location>
    <ligand>
        <name>NADP(+)</name>
        <dbReference type="ChEBI" id="CHEBI:58349"/>
    </ligand>
</feature>
<keyword id="KW-0249">Electron transport</keyword>
<keyword id="KW-0274">FAD</keyword>
<keyword id="KW-0285">Flavoprotein</keyword>
<keyword id="KW-0472">Membrane</keyword>
<keyword id="KW-0496">Mitochondrion</keyword>
<keyword id="KW-0999">Mitochondrion inner membrane</keyword>
<keyword id="KW-0521">NADP</keyword>
<keyword id="KW-0560">Oxidoreductase</keyword>
<keyword id="KW-1185">Reference proteome</keyword>
<keyword id="KW-0809">Transit peptide</keyword>
<keyword id="KW-0813">Transport</keyword>
<evidence type="ECO:0000250" key="1">
    <source>
        <dbReference type="UniProtKB" id="P08165"/>
    </source>
</evidence>
<evidence type="ECO:0000250" key="2">
    <source>
        <dbReference type="UniProtKB" id="P48360"/>
    </source>
</evidence>
<evidence type="ECO:0000255" key="3"/>
<evidence type="ECO:0000305" key="4"/>
<comment type="catalytic activity">
    <reaction evidence="1">
        <text>2 reduced [adrenodoxin] + NADP(+) + H(+) = 2 oxidized [adrenodoxin] + NADPH</text>
        <dbReference type="Rhea" id="RHEA:42312"/>
        <dbReference type="Rhea" id="RHEA-COMP:9998"/>
        <dbReference type="Rhea" id="RHEA-COMP:9999"/>
        <dbReference type="ChEBI" id="CHEBI:15378"/>
        <dbReference type="ChEBI" id="CHEBI:33737"/>
        <dbReference type="ChEBI" id="CHEBI:33738"/>
        <dbReference type="ChEBI" id="CHEBI:57783"/>
        <dbReference type="ChEBI" id="CHEBI:58349"/>
        <dbReference type="EC" id="1.18.1.6"/>
    </reaction>
</comment>
<comment type="cofactor">
    <cofactor evidence="1">
        <name>FAD</name>
        <dbReference type="ChEBI" id="CHEBI:57692"/>
    </cofactor>
</comment>
<comment type="subcellular location">
    <subcellularLocation>
        <location evidence="2">Mitochondrion inner membrane</location>
        <topology evidence="4">Peripheral membrane protein</topology>
    </subcellularLocation>
</comment>
<comment type="similarity">
    <text evidence="4">Belongs to the ferredoxin--NADP reductase type 1 family.</text>
</comment>